<protein>
    <recommendedName>
        <fullName evidence="1">2-keto-3-deoxy-L-rhamnonate aldolase</fullName>
        <shortName evidence="1">KDR aldolase</shortName>
        <ecNumber evidence="1">4.1.2.53</ecNumber>
    </recommendedName>
    <alternativeName>
        <fullName evidence="1">2-dehydro-3-deoxyrhamnonate aldolase</fullName>
    </alternativeName>
</protein>
<keyword id="KW-0456">Lyase</keyword>
<keyword id="KW-0460">Magnesium</keyword>
<keyword id="KW-0479">Metal-binding</keyword>
<keyword id="KW-1185">Reference proteome</keyword>
<comment type="function">
    <text evidence="1">Catalyzes the reversible retro-aldol cleavage of 2-keto-3-deoxy-L-rhamnonate (KDR) to pyruvate and lactaldehyde.</text>
</comment>
<comment type="catalytic activity">
    <reaction evidence="1">
        <text>2-dehydro-3-deoxy-L-rhamnonate = (S)-lactaldehyde + pyruvate</text>
        <dbReference type="Rhea" id="RHEA:25784"/>
        <dbReference type="ChEBI" id="CHEBI:15361"/>
        <dbReference type="ChEBI" id="CHEBI:18041"/>
        <dbReference type="ChEBI" id="CHEBI:58371"/>
        <dbReference type="EC" id="4.1.2.53"/>
    </reaction>
</comment>
<comment type="cofactor">
    <cofactor evidence="1">
        <name>Mg(2+)</name>
        <dbReference type="ChEBI" id="CHEBI:18420"/>
    </cofactor>
    <text evidence="1">Binds 1 Mg(2+) ion per subunit.</text>
</comment>
<comment type="subunit">
    <text evidence="1">Homohexamer.</text>
</comment>
<comment type="similarity">
    <text evidence="1">Belongs to the HpcH/HpaI aldolase family. KDR aldolase subfamily.</text>
</comment>
<name>RHMA_ECO45</name>
<accession>B7MG11</accession>
<gene>
    <name evidence="1" type="primary">rhmA</name>
    <name type="ordered locus">ECS88_2393</name>
</gene>
<organism>
    <name type="scientific">Escherichia coli O45:K1 (strain S88 / ExPEC)</name>
    <dbReference type="NCBI Taxonomy" id="585035"/>
    <lineage>
        <taxon>Bacteria</taxon>
        <taxon>Pseudomonadati</taxon>
        <taxon>Pseudomonadota</taxon>
        <taxon>Gammaproteobacteria</taxon>
        <taxon>Enterobacterales</taxon>
        <taxon>Enterobacteriaceae</taxon>
        <taxon>Escherichia</taxon>
    </lineage>
</organism>
<evidence type="ECO:0000255" key="1">
    <source>
        <dbReference type="HAMAP-Rule" id="MF_01290"/>
    </source>
</evidence>
<dbReference type="EC" id="4.1.2.53" evidence="1"/>
<dbReference type="EMBL" id="CU928161">
    <property type="protein sequence ID" value="CAR03673.1"/>
    <property type="molecule type" value="Genomic_DNA"/>
</dbReference>
<dbReference type="SMR" id="B7MG11"/>
<dbReference type="KEGG" id="ecz:ECS88_2393"/>
<dbReference type="HOGENOM" id="CLU_059964_1_0_6"/>
<dbReference type="Proteomes" id="UP000000747">
    <property type="component" value="Chromosome"/>
</dbReference>
<dbReference type="GO" id="GO:0005737">
    <property type="term" value="C:cytoplasm"/>
    <property type="evidence" value="ECO:0007669"/>
    <property type="project" value="TreeGrafter"/>
</dbReference>
<dbReference type="GO" id="GO:0106099">
    <property type="term" value="F:2-keto-3-deoxy-L-rhamnonate aldolase activity"/>
    <property type="evidence" value="ECO:0007669"/>
    <property type="project" value="UniProtKB-EC"/>
</dbReference>
<dbReference type="GO" id="GO:0000287">
    <property type="term" value="F:magnesium ion binding"/>
    <property type="evidence" value="ECO:0007669"/>
    <property type="project" value="UniProtKB-UniRule"/>
</dbReference>
<dbReference type="FunFam" id="3.20.20.60:FF:000004">
    <property type="entry name" value="5-keto-4-deoxy-D-glucarate aldolase"/>
    <property type="match status" value="1"/>
</dbReference>
<dbReference type="Gene3D" id="3.20.20.60">
    <property type="entry name" value="Phosphoenolpyruvate-binding domains"/>
    <property type="match status" value="1"/>
</dbReference>
<dbReference type="HAMAP" id="MF_01290">
    <property type="entry name" value="KDR_aldolase"/>
    <property type="match status" value="1"/>
</dbReference>
<dbReference type="InterPro" id="IPR005000">
    <property type="entry name" value="Aldolase/citrate-lyase_domain"/>
</dbReference>
<dbReference type="InterPro" id="IPR050251">
    <property type="entry name" value="HpcH-HpaI_aldolase"/>
</dbReference>
<dbReference type="InterPro" id="IPR023593">
    <property type="entry name" value="KDR_aldolase"/>
</dbReference>
<dbReference type="InterPro" id="IPR015813">
    <property type="entry name" value="Pyrv/PenolPyrv_kinase-like_dom"/>
</dbReference>
<dbReference type="InterPro" id="IPR040442">
    <property type="entry name" value="Pyrv_kinase-like_dom_sf"/>
</dbReference>
<dbReference type="NCBIfam" id="NF007521">
    <property type="entry name" value="PRK10128.1"/>
    <property type="match status" value="1"/>
</dbReference>
<dbReference type="PANTHER" id="PTHR30502">
    <property type="entry name" value="2-KETO-3-DEOXY-L-RHAMNONATE ALDOLASE"/>
    <property type="match status" value="1"/>
</dbReference>
<dbReference type="PANTHER" id="PTHR30502:SF5">
    <property type="entry name" value="2-KETO-3-DEOXY-L-RHAMNONATE ALDOLASE"/>
    <property type="match status" value="1"/>
</dbReference>
<dbReference type="Pfam" id="PF03328">
    <property type="entry name" value="HpcH_HpaI"/>
    <property type="match status" value="1"/>
</dbReference>
<dbReference type="SUPFAM" id="SSF51621">
    <property type="entry name" value="Phosphoenolpyruvate/pyruvate domain"/>
    <property type="match status" value="1"/>
</dbReference>
<proteinExistence type="inferred from homology"/>
<reference key="1">
    <citation type="journal article" date="2009" name="PLoS Genet.">
        <title>Organised genome dynamics in the Escherichia coli species results in highly diverse adaptive paths.</title>
        <authorList>
            <person name="Touchon M."/>
            <person name="Hoede C."/>
            <person name="Tenaillon O."/>
            <person name="Barbe V."/>
            <person name="Baeriswyl S."/>
            <person name="Bidet P."/>
            <person name="Bingen E."/>
            <person name="Bonacorsi S."/>
            <person name="Bouchier C."/>
            <person name="Bouvet O."/>
            <person name="Calteau A."/>
            <person name="Chiapello H."/>
            <person name="Clermont O."/>
            <person name="Cruveiller S."/>
            <person name="Danchin A."/>
            <person name="Diard M."/>
            <person name="Dossat C."/>
            <person name="Karoui M.E."/>
            <person name="Frapy E."/>
            <person name="Garry L."/>
            <person name="Ghigo J.M."/>
            <person name="Gilles A.M."/>
            <person name="Johnson J."/>
            <person name="Le Bouguenec C."/>
            <person name="Lescat M."/>
            <person name="Mangenot S."/>
            <person name="Martinez-Jehanne V."/>
            <person name="Matic I."/>
            <person name="Nassif X."/>
            <person name="Oztas S."/>
            <person name="Petit M.A."/>
            <person name="Pichon C."/>
            <person name="Rouy Z."/>
            <person name="Ruf C.S."/>
            <person name="Schneider D."/>
            <person name="Tourret J."/>
            <person name="Vacherie B."/>
            <person name="Vallenet D."/>
            <person name="Medigue C."/>
            <person name="Rocha E.P.C."/>
            <person name="Denamur E."/>
        </authorList>
    </citation>
    <scope>NUCLEOTIDE SEQUENCE [LARGE SCALE GENOMIC DNA]</scope>
    <source>
        <strain>S88 / ExPEC</strain>
    </source>
</reference>
<feature type="chain" id="PRO_1000140392" description="2-keto-3-deoxy-L-rhamnonate aldolase">
    <location>
        <begin position="1"/>
        <end position="267"/>
    </location>
</feature>
<feature type="active site" description="Proton acceptor" evidence="1">
    <location>
        <position position="49"/>
    </location>
</feature>
<feature type="binding site" evidence="1">
    <location>
        <position position="151"/>
    </location>
    <ligand>
        <name>substrate</name>
    </ligand>
</feature>
<feature type="binding site" evidence="1">
    <location>
        <position position="153"/>
    </location>
    <ligand>
        <name>Mg(2+)</name>
        <dbReference type="ChEBI" id="CHEBI:18420"/>
    </ligand>
</feature>
<feature type="binding site" evidence="1">
    <location>
        <position position="178"/>
    </location>
    <ligand>
        <name>substrate</name>
    </ligand>
</feature>
<feature type="binding site" evidence="1">
    <location>
        <position position="179"/>
    </location>
    <ligand>
        <name>Mg(2+)</name>
        <dbReference type="ChEBI" id="CHEBI:18420"/>
    </ligand>
</feature>
<feature type="binding site" evidence="1">
    <location>
        <position position="179"/>
    </location>
    <ligand>
        <name>substrate</name>
    </ligand>
</feature>
<feature type="site" description="Transition state stabilizer" evidence="1">
    <location>
        <position position="74"/>
    </location>
</feature>
<feature type="site" description="Increases basicity of active site His" evidence="1">
    <location>
        <position position="88"/>
    </location>
</feature>
<sequence length="267" mass="28911">MNALLTNPFKERLRKGEVQIGLWLSSTTAYMAEIAATSGYDWLLIDGEHAPNTIQDLYHQLQAVAPYASHPVIRPVEGSKPLIKQVLDIGAQTLLIPMVDTADQARQVVSATRYPPYGERGVGASVARAARWGRIENYMAQVNDSLCLLVQVESKTALDNLDEILDVEGIDGVFIGPADLSASLGYPDNAGHPEVQRIIETSIRRIRAAGKAAGFLAVAPDMAQQCLAWGANFVAVGVDTMLYSDALDQRLAMFKSGKNGPRVKGSY</sequence>